<dbReference type="EC" id="2.7.11.1"/>
<dbReference type="EMBL" id="AL162351">
    <property type="protein sequence ID" value="CAB82762.1"/>
    <property type="molecule type" value="Genomic_DNA"/>
</dbReference>
<dbReference type="EMBL" id="CP002688">
    <property type="protein sequence ID" value="AED90410.1"/>
    <property type="molecule type" value="Genomic_DNA"/>
</dbReference>
<dbReference type="EMBL" id="CP002688">
    <property type="protein sequence ID" value="ANM70167.1"/>
    <property type="molecule type" value="Genomic_DNA"/>
</dbReference>
<dbReference type="EMBL" id="AK117124">
    <property type="protein sequence ID" value="BAC41802.1"/>
    <property type="status" value="ALT_INIT"/>
    <property type="molecule type" value="mRNA"/>
</dbReference>
<dbReference type="EMBL" id="AK117628">
    <property type="protein sequence ID" value="BAC42284.1"/>
    <property type="molecule type" value="mRNA"/>
</dbReference>
<dbReference type="EMBL" id="BT006132">
    <property type="protein sequence ID" value="AAP04117.1"/>
    <property type="molecule type" value="mRNA"/>
</dbReference>
<dbReference type="PIR" id="T48213">
    <property type="entry name" value="T48213"/>
</dbReference>
<dbReference type="RefSeq" id="NP_001331798.1">
    <property type="nucleotide sequence ID" value="NM_001342626.1"/>
</dbReference>
<dbReference type="RefSeq" id="NP_195812.1">
    <property type="nucleotide sequence ID" value="NM_120270.4"/>
</dbReference>
<dbReference type="SMR" id="Q9LZV4"/>
<dbReference type="BioGRID" id="17017">
    <property type="interactions" value="2"/>
</dbReference>
<dbReference type="FunCoup" id="Q9LZV4">
    <property type="interactions" value="1735"/>
</dbReference>
<dbReference type="STRING" id="3702.Q9LZV4"/>
<dbReference type="PaxDb" id="3702-AT5G01920.1"/>
<dbReference type="ProteomicsDB" id="228427"/>
<dbReference type="EnsemblPlants" id="AT5G01920.1">
    <property type="protein sequence ID" value="AT5G01920.1"/>
    <property type="gene ID" value="AT5G01920"/>
</dbReference>
<dbReference type="EnsemblPlants" id="AT5G01920.2">
    <property type="protein sequence ID" value="AT5G01920.2"/>
    <property type="gene ID" value="AT5G01920"/>
</dbReference>
<dbReference type="GeneID" id="831741"/>
<dbReference type="Gramene" id="AT5G01920.1">
    <property type="protein sequence ID" value="AT5G01920.1"/>
    <property type="gene ID" value="AT5G01920"/>
</dbReference>
<dbReference type="Gramene" id="AT5G01920.2">
    <property type="protein sequence ID" value="AT5G01920.2"/>
    <property type="gene ID" value="AT5G01920"/>
</dbReference>
<dbReference type="KEGG" id="ath:AT5G01920"/>
<dbReference type="Araport" id="AT5G01920"/>
<dbReference type="TAIR" id="AT5G01920">
    <property type="gene designation" value="STN8"/>
</dbReference>
<dbReference type="eggNOG" id="KOG0594">
    <property type="taxonomic scope" value="Eukaryota"/>
</dbReference>
<dbReference type="HOGENOM" id="CLU_029162_0_0_1"/>
<dbReference type="InParanoid" id="Q9LZV4"/>
<dbReference type="OMA" id="FTKGEKW"/>
<dbReference type="PhylomeDB" id="Q9LZV4"/>
<dbReference type="PRO" id="PR:Q9LZV4"/>
<dbReference type="Proteomes" id="UP000006548">
    <property type="component" value="Chromosome 5"/>
</dbReference>
<dbReference type="ExpressionAtlas" id="Q9LZV4">
    <property type="expression patterns" value="baseline and differential"/>
</dbReference>
<dbReference type="GO" id="GO:0009507">
    <property type="term" value="C:chloroplast"/>
    <property type="evidence" value="ECO:0000314"/>
    <property type="project" value="UniProtKB"/>
</dbReference>
<dbReference type="GO" id="GO:0009534">
    <property type="term" value="C:chloroplast thylakoid"/>
    <property type="evidence" value="ECO:0007669"/>
    <property type="project" value="UniProtKB-SubCell"/>
</dbReference>
<dbReference type="GO" id="GO:0009579">
    <property type="term" value="C:thylakoid"/>
    <property type="evidence" value="ECO:0000314"/>
    <property type="project" value="UniProtKB"/>
</dbReference>
<dbReference type="GO" id="GO:0005524">
    <property type="term" value="F:ATP binding"/>
    <property type="evidence" value="ECO:0007669"/>
    <property type="project" value="UniProtKB-KW"/>
</dbReference>
<dbReference type="GO" id="GO:0004672">
    <property type="term" value="F:protein kinase activity"/>
    <property type="evidence" value="ECO:0000315"/>
    <property type="project" value="UniProtKB"/>
</dbReference>
<dbReference type="GO" id="GO:0106310">
    <property type="term" value="F:protein serine kinase activity"/>
    <property type="evidence" value="ECO:0007669"/>
    <property type="project" value="RHEA"/>
</dbReference>
<dbReference type="GO" id="GO:0004674">
    <property type="term" value="F:protein serine/threonine kinase activity"/>
    <property type="evidence" value="ECO:0007669"/>
    <property type="project" value="UniProtKB-KW"/>
</dbReference>
<dbReference type="GO" id="GO:0042549">
    <property type="term" value="P:photosystem II stabilization"/>
    <property type="evidence" value="ECO:0000315"/>
    <property type="project" value="UniProtKB"/>
</dbReference>
<dbReference type="CDD" id="cd14013">
    <property type="entry name" value="STKc_SNT7_plant"/>
    <property type="match status" value="1"/>
</dbReference>
<dbReference type="FunFam" id="1.10.510.10:FF:000678">
    <property type="entry name" value="Serine/threonine-protein kinase STN7, chloroplastic"/>
    <property type="match status" value="1"/>
</dbReference>
<dbReference type="Gene3D" id="3.30.200.20">
    <property type="entry name" value="Phosphorylase Kinase, domain 1"/>
    <property type="match status" value="1"/>
</dbReference>
<dbReference type="Gene3D" id="1.10.510.10">
    <property type="entry name" value="Transferase(Phosphotransferase) domain 1"/>
    <property type="match status" value="1"/>
</dbReference>
<dbReference type="InterPro" id="IPR011009">
    <property type="entry name" value="Kinase-like_dom_sf"/>
</dbReference>
<dbReference type="InterPro" id="IPR000719">
    <property type="entry name" value="Prot_kinase_dom"/>
</dbReference>
<dbReference type="InterPro" id="IPR008271">
    <property type="entry name" value="Ser/Thr_kinase_AS"/>
</dbReference>
<dbReference type="PANTHER" id="PTHR46699">
    <property type="entry name" value="SERINE/THREONINE-PROTEIN KINASE STN8, CHLOROPLASTIC-RELATED"/>
    <property type="match status" value="1"/>
</dbReference>
<dbReference type="PANTHER" id="PTHR46699:SF1">
    <property type="entry name" value="SERINE_THREONINE-PROTEIN KINASE STN8, CHLOROPLASTIC"/>
    <property type="match status" value="1"/>
</dbReference>
<dbReference type="Pfam" id="PF00069">
    <property type="entry name" value="Pkinase"/>
    <property type="match status" value="1"/>
</dbReference>
<dbReference type="SMART" id="SM00220">
    <property type="entry name" value="S_TKc"/>
    <property type="match status" value="1"/>
</dbReference>
<dbReference type="SUPFAM" id="SSF56112">
    <property type="entry name" value="Protein kinase-like (PK-like)"/>
    <property type="match status" value="1"/>
</dbReference>
<dbReference type="PROSITE" id="PS50011">
    <property type="entry name" value="PROTEIN_KINASE_DOM"/>
    <property type="match status" value="1"/>
</dbReference>
<dbReference type="PROSITE" id="PS00108">
    <property type="entry name" value="PROTEIN_KINASE_ST"/>
    <property type="match status" value="1"/>
</dbReference>
<name>STN8_ARATH</name>
<gene>
    <name type="primary">STN8</name>
    <name type="ordered locus">At5g01920</name>
    <name type="ORF">T20L15_190</name>
</gene>
<protein>
    <recommendedName>
        <fullName>Serine/threonine-protein kinase STN8, chloroplastic</fullName>
        <ecNumber>2.7.11.1</ecNumber>
    </recommendedName>
    <alternativeName>
        <fullName>Protein STATE TRANSITION 8</fullName>
    </alternativeName>
</protein>
<comment type="function">
    <text evidence="5 6 7 9">Light-dependent serine/threonine protein kinase that specifically phosphorylates N-terminal threonine residues in psbA/D1, psbD/D2, psbC/CP43 and psbH, which are components of the core antenna complex of photosystem II. Phosphorylation of PSII core components facilitates the exchange of chlorophyll proteins between the grana and the stroma lamellae. Also involved in the phosphorylation of the calcium-sensing receptor (CaS).</text>
</comment>
<comment type="catalytic activity">
    <reaction>
        <text>L-seryl-[protein] + ATP = O-phospho-L-seryl-[protein] + ADP + H(+)</text>
        <dbReference type="Rhea" id="RHEA:17989"/>
        <dbReference type="Rhea" id="RHEA-COMP:9863"/>
        <dbReference type="Rhea" id="RHEA-COMP:11604"/>
        <dbReference type="ChEBI" id="CHEBI:15378"/>
        <dbReference type="ChEBI" id="CHEBI:29999"/>
        <dbReference type="ChEBI" id="CHEBI:30616"/>
        <dbReference type="ChEBI" id="CHEBI:83421"/>
        <dbReference type="ChEBI" id="CHEBI:456216"/>
        <dbReference type="EC" id="2.7.11.1"/>
    </reaction>
</comment>
<comment type="catalytic activity">
    <reaction>
        <text>L-threonyl-[protein] + ATP = O-phospho-L-threonyl-[protein] + ADP + H(+)</text>
        <dbReference type="Rhea" id="RHEA:46608"/>
        <dbReference type="Rhea" id="RHEA-COMP:11060"/>
        <dbReference type="Rhea" id="RHEA-COMP:11605"/>
        <dbReference type="ChEBI" id="CHEBI:15378"/>
        <dbReference type="ChEBI" id="CHEBI:30013"/>
        <dbReference type="ChEBI" id="CHEBI:30616"/>
        <dbReference type="ChEBI" id="CHEBI:61977"/>
        <dbReference type="ChEBI" id="CHEBI:456216"/>
        <dbReference type="EC" id="2.7.11.1"/>
    </reaction>
</comment>
<comment type="subcellular location">
    <subcellularLocation>
        <location evidence="11">Plastid</location>
        <location evidence="11">Chloroplast thylakoid</location>
    </subcellularLocation>
</comment>
<comment type="disruption phenotype">
    <text evidence="4 8 9">Not significantly affected in state transitions. Enhanced thylakoid folding and reduced mobility of thylakoid proteins under low-light conditions.</text>
</comment>
<comment type="similarity">
    <text evidence="2">Belongs to the protein kinase superfamily. Ser/Thr protein kinase family.</text>
</comment>
<comment type="sequence caution" evidence="10">
    <conflict type="erroneous initiation">
        <sequence resource="EMBL-CDS" id="BAC41802"/>
    </conflict>
    <text>Extended N-terminus.</text>
</comment>
<keyword id="KW-0067">ATP-binding</keyword>
<keyword id="KW-0150">Chloroplast</keyword>
<keyword id="KW-0418">Kinase</keyword>
<keyword id="KW-0547">Nucleotide-binding</keyword>
<keyword id="KW-0934">Plastid</keyword>
<keyword id="KW-1185">Reference proteome</keyword>
<keyword id="KW-0723">Serine/threonine-protein kinase</keyword>
<keyword id="KW-0793">Thylakoid</keyword>
<keyword id="KW-0808">Transferase</keyword>
<keyword id="KW-0809">Transit peptide</keyword>
<sequence length="495" mass="54979">MASLLSPATPTATSAAFHSCSTAGFSTPTHISSQNSSLSLLSRRGCMMRCSFSPQDIPVDSLSHLPPFLDFQNSLATFSDTQKWGFFVSAGIVWFYLTARPGVLIGAIDAYLLAPLQLGLDTLIGRRLKRSDFLVTEKLGEGSFGVVYAGVLLPKNSTLVDDVRVSKARAKAMDFTGEFKQRVILKKVKVGVRGAEEFGEYEEWFNYRLSRAAPDTCAEFLGSFVADKTNTMFTKGGKWLVWRFEGDRDLADYMKDRSFPSNLESIMFGRVLQGVESVKRRALIIKQIMRQIITSLRKIHGTGIVHRDVKPANLVVTKKGQIKLIDFGAAADLRIGKNYIPERTLLDPDYCPPELYVLPEETPSPPPEPIAALLSPILWQLNSPDLFDMYSAGIVLLQMAVPTLRSTAGLKNFNLEIKSVEYDLNRWRERTRTRPDLSILDLDSGRGWDLVTKLISERGSLRRGRLSAAAALRHPYFLLGGDQAAAVLSKLSFSK</sequence>
<feature type="transit peptide" description="Chloroplast" evidence="1">
    <location>
        <begin position="1"/>
        <end position="49"/>
    </location>
</feature>
<feature type="chain" id="PRO_0000401138" description="Serine/threonine-protein kinase STN8, chloroplastic">
    <location>
        <begin position="50"/>
        <end position="495"/>
    </location>
</feature>
<feature type="domain" description="Protein kinase" evidence="2">
    <location>
        <begin position="133"/>
        <end position="477"/>
    </location>
</feature>
<feature type="active site" description="Proton acceptor" evidence="2 3">
    <location>
        <position position="308"/>
    </location>
</feature>
<feature type="binding site" evidence="2">
    <location>
        <begin position="139"/>
        <end position="147"/>
    </location>
    <ligand>
        <name>ATP</name>
        <dbReference type="ChEBI" id="CHEBI:30616"/>
    </ligand>
</feature>
<feature type="binding site" evidence="2">
    <location>
        <position position="186"/>
    </location>
    <ligand>
        <name>ATP</name>
        <dbReference type="ChEBI" id="CHEBI:30616"/>
    </ligand>
</feature>
<organism>
    <name type="scientific">Arabidopsis thaliana</name>
    <name type="common">Mouse-ear cress</name>
    <dbReference type="NCBI Taxonomy" id="3702"/>
    <lineage>
        <taxon>Eukaryota</taxon>
        <taxon>Viridiplantae</taxon>
        <taxon>Streptophyta</taxon>
        <taxon>Embryophyta</taxon>
        <taxon>Tracheophyta</taxon>
        <taxon>Spermatophyta</taxon>
        <taxon>Magnoliopsida</taxon>
        <taxon>eudicotyledons</taxon>
        <taxon>Gunneridae</taxon>
        <taxon>Pentapetalae</taxon>
        <taxon>rosids</taxon>
        <taxon>malvids</taxon>
        <taxon>Brassicales</taxon>
        <taxon>Brassicaceae</taxon>
        <taxon>Camelineae</taxon>
        <taxon>Arabidopsis</taxon>
    </lineage>
</organism>
<accession>Q9LZV4</accession>
<accession>Q8GZ98</accession>
<evidence type="ECO:0000255" key="1"/>
<evidence type="ECO:0000255" key="2">
    <source>
        <dbReference type="PROSITE-ProRule" id="PRU00159"/>
    </source>
</evidence>
<evidence type="ECO:0000255" key="3">
    <source>
        <dbReference type="PROSITE-ProRule" id="PRU10027"/>
    </source>
</evidence>
<evidence type="ECO:0000269" key="4">
    <source>
    </source>
</evidence>
<evidence type="ECO:0000269" key="5">
    <source>
    </source>
</evidence>
<evidence type="ECO:0000269" key="6">
    <source>
    </source>
</evidence>
<evidence type="ECO:0000269" key="7">
    <source>
    </source>
</evidence>
<evidence type="ECO:0000269" key="8">
    <source>
    </source>
</evidence>
<evidence type="ECO:0000269" key="9">
    <source>
    </source>
</evidence>
<evidence type="ECO:0000305" key="10"/>
<evidence type="ECO:0000305" key="11">
    <source>
    </source>
</evidence>
<proteinExistence type="evidence at transcript level"/>
<reference key="1">
    <citation type="journal article" date="2000" name="Nature">
        <title>Sequence and analysis of chromosome 5 of the plant Arabidopsis thaliana.</title>
        <authorList>
            <person name="Tabata S."/>
            <person name="Kaneko T."/>
            <person name="Nakamura Y."/>
            <person name="Kotani H."/>
            <person name="Kato T."/>
            <person name="Asamizu E."/>
            <person name="Miyajima N."/>
            <person name="Sasamoto S."/>
            <person name="Kimura T."/>
            <person name="Hosouchi T."/>
            <person name="Kawashima K."/>
            <person name="Kohara M."/>
            <person name="Matsumoto M."/>
            <person name="Matsuno A."/>
            <person name="Muraki A."/>
            <person name="Nakayama S."/>
            <person name="Nakazaki N."/>
            <person name="Naruo K."/>
            <person name="Okumura S."/>
            <person name="Shinpo S."/>
            <person name="Takeuchi C."/>
            <person name="Wada T."/>
            <person name="Watanabe A."/>
            <person name="Yamada M."/>
            <person name="Yasuda M."/>
            <person name="Sato S."/>
            <person name="de la Bastide M."/>
            <person name="Huang E."/>
            <person name="Spiegel L."/>
            <person name="Gnoj L."/>
            <person name="O'Shaughnessy A."/>
            <person name="Preston R."/>
            <person name="Habermann K."/>
            <person name="Murray J."/>
            <person name="Johnson D."/>
            <person name="Rohlfing T."/>
            <person name="Nelson J."/>
            <person name="Stoneking T."/>
            <person name="Pepin K."/>
            <person name="Spieth J."/>
            <person name="Sekhon M."/>
            <person name="Armstrong J."/>
            <person name="Becker M."/>
            <person name="Belter E."/>
            <person name="Cordum H."/>
            <person name="Cordes M."/>
            <person name="Courtney L."/>
            <person name="Courtney W."/>
            <person name="Dante M."/>
            <person name="Du H."/>
            <person name="Edwards J."/>
            <person name="Fryman J."/>
            <person name="Haakensen B."/>
            <person name="Lamar E."/>
            <person name="Latreille P."/>
            <person name="Leonard S."/>
            <person name="Meyer R."/>
            <person name="Mulvaney E."/>
            <person name="Ozersky P."/>
            <person name="Riley A."/>
            <person name="Strowmatt C."/>
            <person name="Wagner-McPherson C."/>
            <person name="Wollam A."/>
            <person name="Yoakum M."/>
            <person name="Bell M."/>
            <person name="Dedhia N."/>
            <person name="Parnell L."/>
            <person name="Shah R."/>
            <person name="Rodriguez M."/>
            <person name="Hoon See L."/>
            <person name="Vil D."/>
            <person name="Baker J."/>
            <person name="Kirchoff K."/>
            <person name="Toth K."/>
            <person name="King L."/>
            <person name="Bahret A."/>
            <person name="Miller B."/>
            <person name="Marra M.A."/>
            <person name="Martienssen R."/>
            <person name="McCombie W.R."/>
            <person name="Wilson R.K."/>
            <person name="Murphy G."/>
            <person name="Bancroft I."/>
            <person name="Volckaert G."/>
            <person name="Wambutt R."/>
            <person name="Duesterhoeft A."/>
            <person name="Stiekema W."/>
            <person name="Pohl T."/>
            <person name="Entian K.-D."/>
            <person name="Terryn N."/>
            <person name="Hartley N."/>
            <person name="Bent E."/>
            <person name="Johnson S."/>
            <person name="Langham S.-A."/>
            <person name="McCullagh B."/>
            <person name="Robben J."/>
            <person name="Grymonprez B."/>
            <person name="Zimmermann W."/>
            <person name="Ramsperger U."/>
            <person name="Wedler H."/>
            <person name="Balke K."/>
            <person name="Wedler E."/>
            <person name="Peters S."/>
            <person name="van Staveren M."/>
            <person name="Dirkse W."/>
            <person name="Mooijman P."/>
            <person name="Klein Lankhorst R."/>
            <person name="Weitzenegger T."/>
            <person name="Bothe G."/>
            <person name="Rose M."/>
            <person name="Hauf J."/>
            <person name="Berneiser S."/>
            <person name="Hempel S."/>
            <person name="Feldpausch M."/>
            <person name="Lamberth S."/>
            <person name="Villarroel R."/>
            <person name="Gielen J."/>
            <person name="Ardiles W."/>
            <person name="Bents O."/>
            <person name="Lemcke K."/>
            <person name="Kolesov G."/>
            <person name="Mayer K.F.X."/>
            <person name="Rudd S."/>
            <person name="Schoof H."/>
            <person name="Schueller C."/>
            <person name="Zaccaria P."/>
            <person name="Mewes H.-W."/>
            <person name="Bevan M."/>
            <person name="Fransz P.F."/>
        </authorList>
    </citation>
    <scope>NUCLEOTIDE SEQUENCE [LARGE SCALE GENOMIC DNA]</scope>
    <source>
        <strain>cv. Columbia</strain>
    </source>
</reference>
<reference key="2">
    <citation type="journal article" date="2017" name="Plant J.">
        <title>Araport11: a complete reannotation of the Arabidopsis thaliana reference genome.</title>
        <authorList>
            <person name="Cheng C.Y."/>
            <person name="Krishnakumar V."/>
            <person name="Chan A.P."/>
            <person name="Thibaud-Nissen F."/>
            <person name="Schobel S."/>
            <person name="Town C.D."/>
        </authorList>
    </citation>
    <scope>GENOME REANNOTATION</scope>
    <source>
        <strain>cv. Columbia</strain>
    </source>
</reference>
<reference key="3">
    <citation type="journal article" date="2002" name="Science">
        <title>Functional annotation of a full-length Arabidopsis cDNA collection.</title>
        <authorList>
            <person name="Seki M."/>
            <person name="Narusaka M."/>
            <person name="Kamiya A."/>
            <person name="Ishida J."/>
            <person name="Satou M."/>
            <person name="Sakurai T."/>
            <person name="Nakajima M."/>
            <person name="Enju A."/>
            <person name="Akiyama K."/>
            <person name="Oono Y."/>
            <person name="Muramatsu M."/>
            <person name="Hayashizaki Y."/>
            <person name="Kawai J."/>
            <person name="Carninci P."/>
            <person name="Itoh M."/>
            <person name="Ishii Y."/>
            <person name="Arakawa T."/>
            <person name="Shibata K."/>
            <person name="Shinagawa A."/>
            <person name="Shinozaki K."/>
        </authorList>
    </citation>
    <scope>NUCLEOTIDE SEQUENCE [LARGE SCALE MRNA]</scope>
    <source>
        <strain>cv. Columbia</strain>
    </source>
</reference>
<reference key="4">
    <citation type="journal article" date="2003" name="Science">
        <title>Empirical analysis of transcriptional activity in the Arabidopsis genome.</title>
        <authorList>
            <person name="Yamada K."/>
            <person name="Lim J."/>
            <person name="Dale J.M."/>
            <person name="Chen H."/>
            <person name="Shinn P."/>
            <person name="Palm C.J."/>
            <person name="Southwick A.M."/>
            <person name="Wu H.C."/>
            <person name="Kim C.J."/>
            <person name="Nguyen M."/>
            <person name="Pham P.K."/>
            <person name="Cheuk R.F."/>
            <person name="Karlin-Newmann G."/>
            <person name="Liu S.X."/>
            <person name="Lam B."/>
            <person name="Sakano H."/>
            <person name="Wu T."/>
            <person name="Yu G."/>
            <person name="Miranda M."/>
            <person name="Quach H.L."/>
            <person name="Tripp M."/>
            <person name="Chang C.H."/>
            <person name="Lee J.M."/>
            <person name="Toriumi M.J."/>
            <person name="Chan M.M."/>
            <person name="Tang C.C."/>
            <person name="Onodera C.S."/>
            <person name="Deng J.M."/>
            <person name="Akiyama K."/>
            <person name="Ansari Y."/>
            <person name="Arakawa T."/>
            <person name="Banh J."/>
            <person name="Banno F."/>
            <person name="Bowser L."/>
            <person name="Brooks S.Y."/>
            <person name="Carninci P."/>
            <person name="Chao Q."/>
            <person name="Choy N."/>
            <person name="Enju A."/>
            <person name="Goldsmith A.D."/>
            <person name="Gurjal M."/>
            <person name="Hansen N.F."/>
            <person name="Hayashizaki Y."/>
            <person name="Johnson-Hopson C."/>
            <person name="Hsuan V.W."/>
            <person name="Iida K."/>
            <person name="Karnes M."/>
            <person name="Khan S."/>
            <person name="Koesema E."/>
            <person name="Ishida J."/>
            <person name="Jiang P.X."/>
            <person name="Jones T."/>
            <person name="Kawai J."/>
            <person name="Kamiya A."/>
            <person name="Meyers C."/>
            <person name="Nakajima M."/>
            <person name="Narusaka M."/>
            <person name="Seki M."/>
            <person name="Sakurai T."/>
            <person name="Satou M."/>
            <person name="Tamse R."/>
            <person name="Vaysberg M."/>
            <person name="Wallender E.K."/>
            <person name="Wong C."/>
            <person name="Yamamura Y."/>
            <person name="Yuan S."/>
            <person name="Shinozaki K."/>
            <person name="Davis R.W."/>
            <person name="Theologis A."/>
            <person name="Ecker J.R."/>
        </authorList>
    </citation>
    <scope>NUCLEOTIDE SEQUENCE [LARGE SCALE MRNA]</scope>
    <source>
        <strain>cv. Columbia</strain>
    </source>
</reference>
<reference key="5">
    <citation type="journal article" date="2005" name="J. Biol. Chem.">
        <title>STN8 protein kinase in Arabidopsis thaliana is specific in phosphorylation of photosystem II core proteins.</title>
        <authorList>
            <person name="Vainonen J.P."/>
            <person name="Hansson M."/>
            <person name="Vener A.V."/>
        </authorList>
    </citation>
    <scope>FUNCTION</scope>
</reference>
<reference key="6">
    <citation type="journal article" date="2005" name="Nature">
        <title>State transitions and light adaptation require chloroplast thylakoid protein kinase STN7.</title>
        <authorList>
            <person name="Bellafiore S."/>
            <person name="Barneche F."/>
            <person name="Peltier G."/>
            <person name="Rochaix J.-D."/>
        </authorList>
    </citation>
    <scope>DISRUPTION PHENOTYPE</scope>
</reference>
<reference key="7">
    <citation type="journal article" date="2005" name="Nature">
        <title>Photosystem II core phosphorylation and photosynthetic acclimation require two different protein kinases.</title>
        <authorList>
            <person name="Bonardi V."/>
            <person name="Pesaresi P."/>
            <person name="Becker T."/>
            <person name="Schleiff E."/>
            <person name="Wagner R."/>
            <person name="Pfannschmidt T."/>
            <person name="Jahns P."/>
            <person name="Leister D."/>
        </authorList>
    </citation>
    <scope>FUNCTION</scope>
    <scope>SUBCELLULAR LOCATION</scope>
</reference>
<reference key="8">
    <citation type="journal article" date="2008" name="FEBS J.">
        <title>Light regulation of CaS, a novel phosphoprotein in the thylakoid membrane of Arabidopsis thaliana.</title>
        <authorList>
            <person name="Vainonen J.P."/>
            <person name="Sakuragi Y."/>
            <person name="Stael S."/>
            <person name="Tikkanen M."/>
            <person name="Allahverdiyeva Y."/>
            <person name="Paakkarinen V."/>
            <person name="Aro E."/>
            <person name="Suorsa M."/>
            <person name="Scheller H.V."/>
            <person name="Vener A.V."/>
            <person name="Aro E.M."/>
        </authorList>
    </citation>
    <scope>FUNCTION</scope>
</reference>
<reference key="9">
    <citation type="journal article" date="2009" name="Plant Cell">
        <title>Phosphorylation of photosystem II controls functional macroscopic folding of photosynthetic membranes in Arabidopsis.</title>
        <authorList>
            <person name="Fristedt R."/>
            <person name="Willig A."/>
            <person name="Granath P."/>
            <person name="Crevecoeur M."/>
            <person name="Rochaix J.D."/>
            <person name="Vener A.V."/>
        </authorList>
    </citation>
    <scope>DISRUPTION PHENOTYPE</scope>
</reference>
<reference key="10">
    <citation type="journal article" date="2010" name="Plant J.">
        <title>Visualizing the mobility and distribution of chlorophyll proteins in higher plant thylakoid membranes: effects of photoinhibition and protein phosphorylation.</title>
        <authorList>
            <person name="Goral T.K."/>
            <person name="Johnson M.P."/>
            <person name="Brain A.P."/>
            <person name="Kirchhoff H."/>
            <person name="Ruban A.V."/>
            <person name="Mullineaux C.W."/>
        </authorList>
    </citation>
    <scope>DISRUPTION PHENOTYPE</scope>
    <scope>FUNCTION</scope>
</reference>